<sequence>MEGESKGLIVGISLGLVIGVVLAISALFCFRYHRKKSQIVNSGSRRSATIPIRENGADSCNIMSDSTIGPDSPVKSSKNGRSVWLEGFSKRSNVISASGILEYSYRDLQKATCNFTTLIGQGAFGPVYKAQMSTGEIVAVKVLATDSKQGEKEFQTEVMLLGRLHHRNLVNLIGYCAEKGQHMLIYVYMSKGSLASHLYSEKHEPLSWDLRVYIALDVARGLEYLHDGAVPPVIHRDIKSSNILLDQSMRARVADFGLSREEMVDKHAANIRGTFGYLDPEYISTRTFTKKSDVYGFGVLLFELIAGRNPQQGLMELVELAAMNAEEKVGWEEIVDSRLDGRYDLQEVNEVAAFAYKCISRAPRKRPNMRDIVQVLTRVIKVRHCRKRQKNSPSPSPRLPPPPPIVEESEGELTANGSLRSEIHRRDNSLDSSIAEDVIL</sequence>
<gene>
    <name evidence="8" type="primary">CRLK1</name>
    <name evidence="9" type="ordered locus">At5g54590</name>
    <name evidence="10" type="ORF">MRB17.9</name>
</gene>
<feature type="chain" id="PRO_0000435446" description="Calcium/calmodulin-regulated receptor-like kinase 1">
    <location>
        <begin position="1"/>
        <end position="440"/>
    </location>
</feature>
<feature type="transmembrane region" description="Helical" evidence="2">
    <location>
        <begin position="8"/>
        <end position="28"/>
    </location>
</feature>
<feature type="domain" description="Protein kinase" evidence="3">
    <location>
        <begin position="113"/>
        <end position="380"/>
    </location>
</feature>
<feature type="region of interest" description="Calmodulin binding" evidence="5">
    <location>
        <begin position="28"/>
        <end position="228"/>
    </location>
</feature>
<feature type="region of interest" description="Calmodulin binding" evidence="5">
    <location>
        <begin position="369"/>
        <end position="440"/>
    </location>
</feature>
<feature type="region of interest" description="Disordered" evidence="4">
    <location>
        <begin position="386"/>
        <end position="427"/>
    </location>
</feature>
<feature type="compositionally biased region" description="Pro residues" evidence="4">
    <location>
        <begin position="394"/>
        <end position="405"/>
    </location>
</feature>
<feature type="active site" description="Proton acceptor" evidence="3">
    <location>
        <position position="237"/>
    </location>
</feature>
<feature type="binding site" evidence="3">
    <location>
        <begin position="119"/>
        <end position="127"/>
    </location>
    <ligand>
        <name>ATP</name>
        <dbReference type="ChEBI" id="CHEBI:30616"/>
    </ligand>
</feature>
<feature type="binding site" evidence="3">
    <location>
        <position position="141"/>
    </location>
    <ligand>
        <name>ATP</name>
        <dbReference type="ChEBI" id="CHEBI:30616"/>
    </ligand>
</feature>
<feature type="modified residue" description="Phosphotyrosine" evidence="1">
    <location>
        <position position="186"/>
    </location>
</feature>
<feature type="modified residue" description="Phosphoserine" evidence="1">
    <location>
        <position position="241"/>
    </location>
</feature>
<feature type="modified residue" description="Phosphothreonine" evidence="1">
    <location>
        <position position="274"/>
    </location>
</feature>
<feature type="modified residue" description="Phosphotyrosine" evidence="1">
    <location>
        <position position="282"/>
    </location>
</feature>
<feature type="splice variant" id="VSP_058095" description="In isoform 3.">
    <location>
        <begin position="1"/>
        <end position="62"/>
    </location>
</feature>
<feature type="splice variant" id="VSP_058096" description="In isoform 2 and isoform 3.">
    <original>AVPPVIHRDIKSSNILLDQSMRARVADFGLSREEMVDKHAANIRGTFGYLDPEYISTRTFTKKSDVYGFGVLLFELIAGRNPQQGLMELVELAAMNAEEKVGWEEIVDSRLDGRYDLQEVNEVAAFAYKCISRAPRKRPNMRDIVQVLTRVIKVRHCRKRQKNSPSPSPRLPPPPPIVEESEGELTANGSLRSEIHRRDNSLDSSIAEDVI</original>
    <variation>VSCLLKPFTILMHLLNNNFKTHVLINCSRLFL</variation>
    <location>
        <begin position="229"/>
        <end position="439"/>
    </location>
</feature>
<dbReference type="EC" id="2.7.11.1" evidence="5"/>
<dbReference type="EMBL" id="AB016879">
    <property type="protein sequence ID" value="BAB09338.1"/>
    <property type="molecule type" value="Genomic_DNA"/>
</dbReference>
<dbReference type="EMBL" id="CP002688">
    <property type="protein sequence ID" value="AED96514.1"/>
    <property type="molecule type" value="Genomic_DNA"/>
</dbReference>
<dbReference type="EMBL" id="CP002688">
    <property type="protein sequence ID" value="AED96515.1"/>
    <property type="molecule type" value="Genomic_DNA"/>
</dbReference>
<dbReference type="EMBL" id="CP002688">
    <property type="protein sequence ID" value="ANM71003.1"/>
    <property type="molecule type" value="Genomic_DNA"/>
</dbReference>
<dbReference type="EMBL" id="CP002688">
    <property type="protein sequence ID" value="ANM71004.1"/>
    <property type="molecule type" value="Genomic_DNA"/>
</dbReference>
<dbReference type="EMBL" id="AY056402">
    <property type="protein sequence ID" value="AAL08258.1"/>
    <property type="molecule type" value="mRNA"/>
</dbReference>
<dbReference type="EMBL" id="AY081708">
    <property type="protein sequence ID" value="AAL87361.1"/>
    <property type="molecule type" value="mRNA"/>
</dbReference>
<dbReference type="RefSeq" id="NP_001318798.1">
    <molecule id="Q9FIU5-1"/>
    <property type="nucleotide sequence ID" value="NM_001345091.1"/>
</dbReference>
<dbReference type="RefSeq" id="NP_001332565.1">
    <molecule id="Q9FIU5-1"/>
    <property type="nucleotide sequence ID" value="NM_001345092.1"/>
</dbReference>
<dbReference type="RefSeq" id="NP_568809.2">
    <molecule id="Q9FIU5-1"/>
    <property type="nucleotide sequence ID" value="NM_124840.3"/>
</dbReference>
<dbReference type="RefSeq" id="NP_851189.1">
    <molecule id="Q9FIU5-2"/>
    <property type="nucleotide sequence ID" value="NM_180858.1"/>
</dbReference>
<dbReference type="SMR" id="Q9FIU5"/>
<dbReference type="FunCoup" id="Q9FIU5">
    <property type="interactions" value="179"/>
</dbReference>
<dbReference type="STRING" id="3702.Q9FIU5"/>
<dbReference type="PaxDb" id="3702-AT5G54590.2"/>
<dbReference type="ProteomicsDB" id="224408">
    <molecule id="Q9FIU5-1"/>
</dbReference>
<dbReference type="EnsemblPlants" id="AT5G54590.1">
    <molecule id="Q9FIU5-2"/>
    <property type="protein sequence ID" value="AT5G54590.1"/>
    <property type="gene ID" value="AT5G54590"/>
</dbReference>
<dbReference type="EnsemblPlants" id="AT5G54590.2">
    <molecule id="Q9FIU5-1"/>
    <property type="protein sequence ID" value="AT5G54590.2"/>
    <property type="gene ID" value="AT5G54590"/>
</dbReference>
<dbReference type="EnsemblPlants" id="AT5G54590.3">
    <molecule id="Q9FIU5-1"/>
    <property type="protein sequence ID" value="AT5G54590.3"/>
    <property type="gene ID" value="AT5G54590"/>
</dbReference>
<dbReference type="EnsemblPlants" id="AT5G54590.4">
    <molecule id="Q9FIU5-1"/>
    <property type="protein sequence ID" value="AT5G54590.4"/>
    <property type="gene ID" value="AT5G54590"/>
</dbReference>
<dbReference type="GeneID" id="835548"/>
<dbReference type="Gramene" id="AT5G54590.1">
    <molecule id="Q9FIU5-2"/>
    <property type="protein sequence ID" value="AT5G54590.1"/>
    <property type="gene ID" value="AT5G54590"/>
</dbReference>
<dbReference type="Gramene" id="AT5G54590.2">
    <molecule id="Q9FIU5-1"/>
    <property type="protein sequence ID" value="AT5G54590.2"/>
    <property type="gene ID" value="AT5G54590"/>
</dbReference>
<dbReference type="Gramene" id="AT5G54590.3">
    <molecule id="Q9FIU5-1"/>
    <property type="protein sequence ID" value="AT5G54590.3"/>
    <property type="gene ID" value="AT5G54590"/>
</dbReference>
<dbReference type="Gramene" id="AT5G54590.4">
    <molecule id="Q9FIU5-1"/>
    <property type="protein sequence ID" value="AT5G54590.4"/>
    <property type="gene ID" value="AT5G54590"/>
</dbReference>
<dbReference type="KEGG" id="ath:AT5G54590"/>
<dbReference type="Araport" id="AT5G54590"/>
<dbReference type="TAIR" id="AT5G54590">
    <property type="gene designation" value="CRLK1"/>
</dbReference>
<dbReference type="eggNOG" id="KOG1187">
    <property type="taxonomic scope" value="Eukaryota"/>
</dbReference>
<dbReference type="HOGENOM" id="CLU_000288_21_4_1"/>
<dbReference type="InParanoid" id="Q9FIU5"/>
<dbReference type="OMA" id="SFWLEGF"/>
<dbReference type="OrthoDB" id="4062651at2759"/>
<dbReference type="PhylomeDB" id="Q9FIU5"/>
<dbReference type="PRO" id="PR:Q9FIU5"/>
<dbReference type="Proteomes" id="UP000006548">
    <property type="component" value="Chromosome 5"/>
</dbReference>
<dbReference type="ExpressionAtlas" id="Q9FIU5">
    <property type="expression patterns" value="baseline and differential"/>
</dbReference>
<dbReference type="GO" id="GO:0010008">
    <property type="term" value="C:endosome membrane"/>
    <property type="evidence" value="ECO:0000314"/>
    <property type="project" value="UniProtKB"/>
</dbReference>
<dbReference type="GO" id="GO:0005886">
    <property type="term" value="C:plasma membrane"/>
    <property type="evidence" value="ECO:0000314"/>
    <property type="project" value="UniProtKB"/>
</dbReference>
<dbReference type="GO" id="GO:0005524">
    <property type="term" value="F:ATP binding"/>
    <property type="evidence" value="ECO:0007669"/>
    <property type="project" value="UniProtKB-KW"/>
</dbReference>
<dbReference type="GO" id="GO:0005516">
    <property type="term" value="F:calmodulin binding"/>
    <property type="evidence" value="ECO:0000314"/>
    <property type="project" value="TAIR"/>
</dbReference>
<dbReference type="GO" id="GO:0106310">
    <property type="term" value="F:protein serine kinase activity"/>
    <property type="evidence" value="ECO:0007669"/>
    <property type="project" value="RHEA"/>
</dbReference>
<dbReference type="GO" id="GO:0004674">
    <property type="term" value="F:protein serine/threonine kinase activity"/>
    <property type="evidence" value="ECO:0000314"/>
    <property type="project" value="UniProtKB"/>
</dbReference>
<dbReference type="GO" id="GO:0009631">
    <property type="term" value="P:cold acclimation"/>
    <property type="evidence" value="ECO:0000314"/>
    <property type="project" value="UniProtKB"/>
</dbReference>
<dbReference type="GO" id="GO:0009409">
    <property type="term" value="P:response to cold"/>
    <property type="evidence" value="ECO:0000314"/>
    <property type="project" value="UniProtKB"/>
</dbReference>
<dbReference type="CDD" id="cd14066">
    <property type="entry name" value="STKc_IRAK"/>
    <property type="match status" value="1"/>
</dbReference>
<dbReference type="FunFam" id="3.30.200.20:FF:000274">
    <property type="entry name" value="Calcium/calmodulin-regulated receptor-like kinase 1"/>
    <property type="match status" value="1"/>
</dbReference>
<dbReference type="FunFam" id="1.10.510.10:FF:000495">
    <property type="entry name" value="calcium/calmodulin-regulated receptor-like kinase 1"/>
    <property type="match status" value="1"/>
</dbReference>
<dbReference type="Gene3D" id="3.30.200.20">
    <property type="entry name" value="Phosphorylase Kinase, domain 1"/>
    <property type="match status" value="1"/>
</dbReference>
<dbReference type="Gene3D" id="1.10.510.10">
    <property type="entry name" value="Transferase(Phosphotransferase) domain 1"/>
    <property type="match status" value="1"/>
</dbReference>
<dbReference type="InterPro" id="IPR011009">
    <property type="entry name" value="Kinase-like_dom_sf"/>
</dbReference>
<dbReference type="InterPro" id="IPR000719">
    <property type="entry name" value="Prot_kinase_dom"/>
</dbReference>
<dbReference type="InterPro" id="IPR001245">
    <property type="entry name" value="Ser-Thr/Tyr_kinase_cat_dom"/>
</dbReference>
<dbReference type="InterPro" id="IPR008271">
    <property type="entry name" value="Ser/Thr_kinase_AS"/>
</dbReference>
<dbReference type="PANTHER" id="PTHR47989:SF24">
    <property type="entry name" value="CALCIUM_CALMODULIN-REGULATED RECEPTOR-LIKE KINASE 1 ISOFORM X1"/>
    <property type="match status" value="1"/>
</dbReference>
<dbReference type="PANTHER" id="PTHR47989">
    <property type="entry name" value="OS01G0750732 PROTEIN"/>
    <property type="match status" value="1"/>
</dbReference>
<dbReference type="Pfam" id="PF07714">
    <property type="entry name" value="PK_Tyr_Ser-Thr"/>
    <property type="match status" value="1"/>
</dbReference>
<dbReference type="SMART" id="SM00220">
    <property type="entry name" value="S_TKc"/>
    <property type="match status" value="1"/>
</dbReference>
<dbReference type="SUPFAM" id="SSF56112">
    <property type="entry name" value="Protein kinase-like (PK-like)"/>
    <property type="match status" value="1"/>
</dbReference>
<dbReference type="PROSITE" id="PS50011">
    <property type="entry name" value="PROTEIN_KINASE_DOM"/>
    <property type="match status" value="1"/>
</dbReference>
<dbReference type="PROSITE" id="PS00108">
    <property type="entry name" value="PROTEIN_KINASE_ST"/>
    <property type="match status" value="1"/>
</dbReference>
<organism>
    <name type="scientific">Arabidopsis thaliana</name>
    <name type="common">Mouse-ear cress</name>
    <dbReference type="NCBI Taxonomy" id="3702"/>
    <lineage>
        <taxon>Eukaryota</taxon>
        <taxon>Viridiplantae</taxon>
        <taxon>Streptophyta</taxon>
        <taxon>Embryophyta</taxon>
        <taxon>Tracheophyta</taxon>
        <taxon>Spermatophyta</taxon>
        <taxon>Magnoliopsida</taxon>
        <taxon>eudicotyledons</taxon>
        <taxon>Gunneridae</taxon>
        <taxon>Pentapetalae</taxon>
        <taxon>rosids</taxon>
        <taxon>malvids</taxon>
        <taxon>Brassicales</taxon>
        <taxon>Brassicaceae</taxon>
        <taxon>Camelineae</taxon>
        <taxon>Arabidopsis</taxon>
    </lineage>
</organism>
<evidence type="ECO:0000250" key="1">
    <source>
        <dbReference type="UniProtKB" id="O48814"/>
    </source>
</evidence>
<evidence type="ECO:0000255" key="2"/>
<evidence type="ECO:0000255" key="3">
    <source>
        <dbReference type="PROSITE-ProRule" id="PRU00159"/>
    </source>
</evidence>
<evidence type="ECO:0000256" key="4">
    <source>
        <dbReference type="SAM" id="MobiDB-lite"/>
    </source>
</evidence>
<evidence type="ECO:0000269" key="5">
    <source>
    </source>
</evidence>
<evidence type="ECO:0000269" key="6">
    <source>
    </source>
</evidence>
<evidence type="ECO:0000269" key="7">
    <source>
    </source>
</evidence>
<evidence type="ECO:0000303" key="8">
    <source>
    </source>
</evidence>
<evidence type="ECO:0000312" key="9">
    <source>
        <dbReference type="Araport" id="AT5G54590"/>
    </source>
</evidence>
<evidence type="ECO:0000312" key="10">
    <source>
        <dbReference type="EMBL" id="BAB09338.1"/>
    </source>
</evidence>
<name>CRLK1_ARATH</name>
<accession>Q9FIU5</accession>
<accession>F4K1S6</accession>
<accession>Q93ZP7</accession>
<comment type="function">
    <text evidence="5 6 7">Required for cold tolerance, via the activation of MAP kinases activity (PubMed:20026608, PubMed:20724845). Phosphorylates and activates MEKK1 in response to cold in a calcium-dependent manner (PubMed:23857079).</text>
</comment>
<comment type="catalytic activity">
    <reaction evidence="5">
        <text>L-seryl-[protein] + ATP = O-phospho-L-seryl-[protein] + ADP + H(+)</text>
        <dbReference type="Rhea" id="RHEA:17989"/>
        <dbReference type="Rhea" id="RHEA-COMP:9863"/>
        <dbReference type="Rhea" id="RHEA-COMP:11604"/>
        <dbReference type="ChEBI" id="CHEBI:15378"/>
        <dbReference type="ChEBI" id="CHEBI:29999"/>
        <dbReference type="ChEBI" id="CHEBI:30616"/>
        <dbReference type="ChEBI" id="CHEBI:83421"/>
        <dbReference type="ChEBI" id="CHEBI:456216"/>
        <dbReference type="EC" id="2.7.11.1"/>
    </reaction>
</comment>
<comment type="catalytic activity">
    <reaction evidence="5">
        <text>L-threonyl-[protein] + ATP = O-phospho-L-threonyl-[protein] + ADP + H(+)</text>
        <dbReference type="Rhea" id="RHEA:46608"/>
        <dbReference type="Rhea" id="RHEA-COMP:11060"/>
        <dbReference type="Rhea" id="RHEA-COMP:11605"/>
        <dbReference type="ChEBI" id="CHEBI:15378"/>
        <dbReference type="ChEBI" id="CHEBI:30013"/>
        <dbReference type="ChEBI" id="CHEBI:30616"/>
        <dbReference type="ChEBI" id="CHEBI:61977"/>
        <dbReference type="ChEBI" id="CHEBI:456216"/>
        <dbReference type="EC" id="2.7.11.1"/>
    </reaction>
</comment>
<comment type="activity regulation">
    <text evidence="5">Kinase activity is stimulated by calcium/calmodulin, but blocked by chlorpromazine.</text>
</comment>
<comment type="subunit">
    <text evidence="5 6">Interacts with calmodulin (CaM) in a calcium- (Ca(2+)-) dependent manner (PubMed:20026608). Binds to MEKK1 (PubMed:20724845).</text>
</comment>
<comment type="subcellular location">
    <subcellularLocation>
        <location evidence="5 6">Cell membrane</location>
        <topology evidence="5">Single-pass membrane protein</topology>
    </subcellularLocation>
    <subcellularLocation>
        <location evidence="6">Endosome membrane</location>
        <topology evidence="2">Single-pass membrane protein</topology>
    </subcellularLocation>
</comment>
<comment type="alternative products">
    <event type="alternative splicing"/>
    <isoform>
        <id>Q9FIU5-1</id>
        <name>1</name>
        <sequence type="displayed"/>
    </isoform>
    <isoform>
        <id>Q9FIU5-2</id>
        <name>2</name>
        <sequence type="described" ref="VSP_058096"/>
    </isoform>
    <isoform>
        <id>Q9FIU5-3</id>
        <name>3</name>
        <sequence type="described" ref="VSP_058095 VSP_058096"/>
    </isoform>
</comment>
<comment type="tissue specificity">
    <text evidence="5">Similar transcript expression levels in seedlings, roots, leaves, stems and flowers, and lower levels in siliques, but protein accumulates mostly in 7-day-old seedlings, old roots and young leaves and, to a lower extent, in young roots, old leaves, flowers and siliques (at protein level).</text>
</comment>
<comment type="induction">
    <text evidence="5">Differential expression between transcripts and proteins. Induced transiently by cold and hydrogen peroxide H(2)O(2) treatments despite stable transcript level (at protein level).</text>
</comment>
<comment type="disruption phenotype">
    <text evidence="5 6">Increased sensitivity to chilling and freezing temperatures, associated with a delayed induction of cold-responsive genes (PubMed:20026608, PubMed:20724845). Impaired MAP kinases activation in response to cold (PubMed:20724845).</text>
</comment>
<comment type="similarity">
    <text evidence="3">Belongs to the protein kinase superfamily. Ser/Thr protein kinase family.</text>
</comment>
<protein>
    <recommendedName>
        <fullName evidence="8">Calcium/calmodulin-regulated receptor-like kinase 1</fullName>
        <shortName evidence="8">AtCRLK1</shortName>
        <ecNumber evidence="5">2.7.11.1</ecNumber>
    </recommendedName>
</protein>
<reference key="1">
    <citation type="journal article" date="1998" name="DNA Res.">
        <title>Structural analysis of Arabidopsis thaliana chromosome 5. VII. Sequence features of the regions of 1,013,767 bp covered by sixteen physically assigned P1 and TAC clones.</title>
        <authorList>
            <person name="Nakamura Y."/>
            <person name="Sato S."/>
            <person name="Asamizu E."/>
            <person name="Kaneko T."/>
            <person name="Kotani H."/>
            <person name="Miyajima N."/>
            <person name="Tabata S."/>
        </authorList>
    </citation>
    <scope>NUCLEOTIDE SEQUENCE [LARGE SCALE GENOMIC DNA]</scope>
    <source>
        <strain>cv. Columbia</strain>
    </source>
</reference>
<reference key="2">
    <citation type="journal article" date="2017" name="Plant J.">
        <title>Araport11: a complete reannotation of the Arabidopsis thaliana reference genome.</title>
        <authorList>
            <person name="Cheng C.Y."/>
            <person name="Krishnakumar V."/>
            <person name="Chan A.P."/>
            <person name="Thibaud-Nissen F."/>
            <person name="Schobel S."/>
            <person name="Town C.D."/>
        </authorList>
    </citation>
    <scope>GENOME REANNOTATION</scope>
    <source>
        <strain>cv. Columbia</strain>
    </source>
</reference>
<reference key="3">
    <citation type="journal article" date="2003" name="Science">
        <title>Empirical analysis of transcriptional activity in the Arabidopsis genome.</title>
        <authorList>
            <person name="Yamada K."/>
            <person name="Lim J."/>
            <person name="Dale J.M."/>
            <person name="Chen H."/>
            <person name="Shinn P."/>
            <person name="Palm C.J."/>
            <person name="Southwick A.M."/>
            <person name="Wu H.C."/>
            <person name="Kim C.J."/>
            <person name="Nguyen M."/>
            <person name="Pham P.K."/>
            <person name="Cheuk R.F."/>
            <person name="Karlin-Newmann G."/>
            <person name="Liu S.X."/>
            <person name="Lam B."/>
            <person name="Sakano H."/>
            <person name="Wu T."/>
            <person name="Yu G."/>
            <person name="Miranda M."/>
            <person name="Quach H.L."/>
            <person name="Tripp M."/>
            <person name="Chang C.H."/>
            <person name="Lee J.M."/>
            <person name="Toriumi M.J."/>
            <person name="Chan M.M."/>
            <person name="Tang C.C."/>
            <person name="Onodera C.S."/>
            <person name="Deng J.M."/>
            <person name="Akiyama K."/>
            <person name="Ansari Y."/>
            <person name="Arakawa T."/>
            <person name="Banh J."/>
            <person name="Banno F."/>
            <person name="Bowser L."/>
            <person name="Brooks S.Y."/>
            <person name="Carninci P."/>
            <person name="Chao Q."/>
            <person name="Choy N."/>
            <person name="Enju A."/>
            <person name="Goldsmith A.D."/>
            <person name="Gurjal M."/>
            <person name="Hansen N.F."/>
            <person name="Hayashizaki Y."/>
            <person name="Johnson-Hopson C."/>
            <person name="Hsuan V.W."/>
            <person name="Iida K."/>
            <person name="Karnes M."/>
            <person name="Khan S."/>
            <person name="Koesema E."/>
            <person name="Ishida J."/>
            <person name="Jiang P.X."/>
            <person name="Jones T."/>
            <person name="Kawai J."/>
            <person name="Kamiya A."/>
            <person name="Meyers C."/>
            <person name="Nakajima M."/>
            <person name="Narusaka M."/>
            <person name="Seki M."/>
            <person name="Sakurai T."/>
            <person name="Satou M."/>
            <person name="Tamse R."/>
            <person name="Vaysberg M."/>
            <person name="Wallender E.K."/>
            <person name="Wong C."/>
            <person name="Yamamura Y."/>
            <person name="Yuan S."/>
            <person name="Shinozaki K."/>
            <person name="Davis R.W."/>
            <person name="Theologis A."/>
            <person name="Ecker J.R."/>
        </authorList>
    </citation>
    <scope>NUCLEOTIDE SEQUENCE [LARGE SCALE MRNA] (ISOFORM 3)</scope>
    <source>
        <strain>cv. Columbia</strain>
    </source>
</reference>
<reference key="4">
    <citation type="journal article" date="2010" name="FEBS Lett.">
        <title>Characterization of GmCaMK1, a member of a soybean calmodulin-binding receptor-like kinase family.</title>
        <authorList>
            <person name="DeFalco T.A."/>
            <person name="Chiasson D."/>
            <person name="Munro K."/>
            <person name="Kaiser B.N."/>
            <person name="Snedden W.A."/>
        </authorList>
    </citation>
    <scope>GENE FAMILY</scope>
</reference>
<reference key="5">
    <citation type="journal article" date="2010" name="J. Biol. Chem.">
        <title>A calcium/calmodulin-regulated member of the receptor-like kinase family confers cold tolerance in plants.</title>
        <authorList>
            <person name="Yang T."/>
            <person name="Chaudhuri S."/>
            <person name="Yang L."/>
            <person name="Du L."/>
            <person name="Poovaiah B.W."/>
        </authorList>
    </citation>
    <scope>FUNCTION</scope>
    <scope>DISRUPTION PHENOTYPE</scope>
    <scope>INTERACTION WITH CALMODULIN</scope>
    <scope>ACTIVITY REGULATION</scope>
    <scope>CATALYTIC ACTIVITY</scope>
    <scope>SUBCELLULAR LOCATION</scope>
    <scope>INDUCTION BY COLD AND HYDROGEN PEROXIDE</scope>
    <scope>TISSUE SPECIFICITY</scope>
    <source>
        <strain>cv. Columbia</strain>
    </source>
</reference>
<reference key="6">
    <citation type="journal article" date="2010" name="Plant Signal. Behav.">
        <title>Calcium/calmodulin-regulated receptor-like kinase CRLK1 interacts with MEKK1 in plants.</title>
        <authorList>
            <person name="Yang T."/>
            <person name="Shad Ali G."/>
            <person name="Yang L."/>
            <person name="Du L."/>
            <person name="Reddy A.S."/>
            <person name="Poovaiah B.W."/>
        </authorList>
    </citation>
    <scope>FUNCTION</scope>
    <scope>DISRUPTION PHENOTYPE</scope>
    <scope>INTERACTION WITH MEKK1</scope>
    <scope>SUBCELLULAR LOCATION</scope>
</reference>
<reference key="7">
    <citation type="journal article" date="2013" name="J. Plant Res.">
        <title>Phosphorylation of Arabidopsis thaliana MEKK1 via Ca(2+) signaling as a part of the cold stress response.</title>
        <authorList>
            <person name="Furuya T."/>
            <person name="Matsuoka D."/>
            <person name="Nanmori T."/>
        </authorList>
    </citation>
    <scope>FUNCTION</scope>
    <source>
        <strain>cv. Columbia</strain>
    </source>
</reference>
<keyword id="KW-0025">Alternative splicing</keyword>
<keyword id="KW-0067">ATP-binding</keyword>
<keyword id="KW-0112">Calmodulin-binding</keyword>
<keyword id="KW-1003">Cell membrane</keyword>
<keyword id="KW-0967">Endosome</keyword>
<keyword id="KW-0418">Kinase</keyword>
<keyword id="KW-0472">Membrane</keyword>
<keyword id="KW-0547">Nucleotide-binding</keyword>
<keyword id="KW-0597">Phosphoprotein</keyword>
<keyword id="KW-0675">Receptor</keyword>
<keyword id="KW-1185">Reference proteome</keyword>
<keyword id="KW-0723">Serine/threonine-protein kinase</keyword>
<keyword id="KW-0808">Transferase</keyword>
<keyword id="KW-0812">Transmembrane</keyword>
<keyword id="KW-1133">Transmembrane helix</keyword>
<proteinExistence type="evidence at protein level"/>